<reference key="1">
    <citation type="journal article" date="2004" name="Nature">
        <title>Genome evolution in yeasts.</title>
        <authorList>
            <person name="Dujon B."/>
            <person name="Sherman D."/>
            <person name="Fischer G."/>
            <person name="Durrens P."/>
            <person name="Casaregola S."/>
            <person name="Lafontaine I."/>
            <person name="de Montigny J."/>
            <person name="Marck C."/>
            <person name="Neuveglise C."/>
            <person name="Talla E."/>
            <person name="Goffard N."/>
            <person name="Frangeul L."/>
            <person name="Aigle M."/>
            <person name="Anthouard V."/>
            <person name="Babour A."/>
            <person name="Barbe V."/>
            <person name="Barnay S."/>
            <person name="Blanchin S."/>
            <person name="Beckerich J.-M."/>
            <person name="Beyne E."/>
            <person name="Bleykasten C."/>
            <person name="Boisrame A."/>
            <person name="Boyer J."/>
            <person name="Cattolico L."/>
            <person name="Confanioleri F."/>
            <person name="de Daruvar A."/>
            <person name="Despons L."/>
            <person name="Fabre E."/>
            <person name="Fairhead C."/>
            <person name="Ferry-Dumazet H."/>
            <person name="Groppi A."/>
            <person name="Hantraye F."/>
            <person name="Hennequin C."/>
            <person name="Jauniaux N."/>
            <person name="Joyet P."/>
            <person name="Kachouri R."/>
            <person name="Kerrest A."/>
            <person name="Koszul R."/>
            <person name="Lemaire M."/>
            <person name="Lesur I."/>
            <person name="Ma L."/>
            <person name="Muller H."/>
            <person name="Nicaud J.-M."/>
            <person name="Nikolski M."/>
            <person name="Oztas S."/>
            <person name="Ozier-Kalogeropoulos O."/>
            <person name="Pellenz S."/>
            <person name="Potier S."/>
            <person name="Richard G.-F."/>
            <person name="Straub M.-L."/>
            <person name="Suleau A."/>
            <person name="Swennen D."/>
            <person name="Tekaia F."/>
            <person name="Wesolowski-Louvel M."/>
            <person name="Westhof E."/>
            <person name="Wirth B."/>
            <person name="Zeniou-Meyer M."/>
            <person name="Zivanovic Y."/>
            <person name="Bolotin-Fukuhara M."/>
            <person name="Thierry A."/>
            <person name="Bouchier C."/>
            <person name="Caudron B."/>
            <person name="Scarpelli C."/>
            <person name="Gaillardin C."/>
            <person name="Weissenbach J."/>
            <person name="Wincker P."/>
            <person name="Souciet J.-L."/>
        </authorList>
    </citation>
    <scope>NUCLEOTIDE SEQUENCE [LARGE SCALE GENOMIC DNA]</scope>
    <source>
        <strain>ATCC 8585 / CBS 2359 / DSM 70799 / NBRC 1267 / NRRL Y-1140 / WM37</strain>
    </source>
</reference>
<comment type="function">
    <text evidence="1">Involved in pre-mRNA splicing.</text>
</comment>
<comment type="subunit">
    <text evidence="1">Associated with the spliceosome.</text>
</comment>
<comment type="subcellular location">
    <subcellularLocation>
        <location evidence="1">Nucleus</location>
    </subcellularLocation>
</comment>
<comment type="similarity">
    <text evidence="5">Belongs to the CWC24 family.</text>
</comment>
<dbReference type="EMBL" id="CR382123">
    <property type="protein sequence ID" value="CAH01864.1"/>
    <property type="molecule type" value="Genomic_DNA"/>
</dbReference>
<dbReference type="RefSeq" id="XP_453013.1">
    <property type="nucleotide sequence ID" value="XM_453013.1"/>
</dbReference>
<dbReference type="SMR" id="Q6CSS6"/>
<dbReference type="FunCoup" id="Q6CSS6">
    <property type="interactions" value="330"/>
</dbReference>
<dbReference type="STRING" id="284590.Q6CSS6"/>
<dbReference type="PaxDb" id="284590-Q6CSS6"/>
<dbReference type="KEGG" id="kla:KLLA0_C18260g"/>
<dbReference type="eggNOG" id="KOG1813">
    <property type="taxonomic scope" value="Eukaryota"/>
</dbReference>
<dbReference type="HOGENOM" id="CLU_050460_3_0_1"/>
<dbReference type="InParanoid" id="Q6CSS6"/>
<dbReference type="OMA" id="DYKSPIK"/>
<dbReference type="Proteomes" id="UP000000598">
    <property type="component" value="Chromosome C"/>
</dbReference>
<dbReference type="GO" id="GO:0005684">
    <property type="term" value="C:U2-type spliceosomal complex"/>
    <property type="evidence" value="ECO:0007669"/>
    <property type="project" value="TreeGrafter"/>
</dbReference>
<dbReference type="GO" id="GO:0003677">
    <property type="term" value="F:DNA binding"/>
    <property type="evidence" value="ECO:0007669"/>
    <property type="project" value="UniProtKB-KW"/>
</dbReference>
<dbReference type="GO" id="GO:0008270">
    <property type="term" value="F:zinc ion binding"/>
    <property type="evidence" value="ECO:0007669"/>
    <property type="project" value="UniProtKB-KW"/>
</dbReference>
<dbReference type="GO" id="GO:0006397">
    <property type="term" value="P:mRNA processing"/>
    <property type="evidence" value="ECO:0007669"/>
    <property type="project" value="UniProtKB-KW"/>
</dbReference>
<dbReference type="GO" id="GO:0034247">
    <property type="term" value="P:snoRNA splicing"/>
    <property type="evidence" value="ECO:0007669"/>
    <property type="project" value="TreeGrafter"/>
</dbReference>
<dbReference type="CDD" id="cd16539">
    <property type="entry name" value="RING-HC_RNF113A_B"/>
    <property type="match status" value="1"/>
</dbReference>
<dbReference type="Gene3D" id="4.10.1000.10">
    <property type="entry name" value="Zinc finger, CCCH-type"/>
    <property type="match status" value="1"/>
</dbReference>
<dbReference type="Gene3D" id="3.30.40.10">
    <property type="entry name" value="Zinc/RING finger domain, C3HC4 (zinc finger)"/>
    <property type="match status" value="1"/>
</dbReference>
<dbReference type="InterPro" id="IPR039971">
    <property type="entry name" value="CWC24-like"/>
</dbReference>
<dbReference type="InterPro" id="IPR000571">
    <property type="entry name" value="Znf_CCCH"/>
</dbReference>
<dbReference type="InterPro" id="IPR036855">
    <property type="entry name" value="Znf_CCCH_sf"/>
</dbReference>
<dbReference type="InterPro" id="IPR001841">
    <property type="entry name" value="Znf_RING"/>
</dbReference>
<dbReference type="InterPro" id="IPR013083">
    <property type="entry name" value="Znf_RING/FYVE/PHD"/>
</dbReference>
<dbReference type="PANTHER" id="PTHR12930:SF0">
    <property type="entry name" value="RING FINGER PROTEIN 113B"/>
    <property type="match status" value="1"/>
</dbReference>
<dbReference type="PANTHER" id="PTHR12930">
    <property type="entry name" value="ZINC FINGER PROTEIN 183"/>
    <property type="match status" value="1"/>
</dbReference>
<dbReference type="Pfam" id="PF13923">
    <property type="entry name" value="zf-C3HC4_2"/>
    <property type="match status" value="1"/>
</dbReference>
<dbReference type="Pfam" id="PF00642">
    <property type="entry name" value="zf-CCCH"/>
    <property type="match status" value="1"/>
</dbReference>
<dbReference type="SMART" id="SM00184">
    <property type="entry name" value="RING"/>
    <property type="match status" value="1"/>
</dbReference>
<dbReference type="SMART" id="SM00356">
    <property type="entry name" value="ZnF_C3H1"/>
    <property type="match status" value="1"/>
</dbReference>
<dbReference type="SUPFAM" id="SSF90229">
    <property type="entry name" value="CCCH zinc finger"/>
    <property type="match status" value="1"/>
</dbReference>
<dbReference type="SUPFAM" id="SSF57850">
    <property type="entry name" value="RING/U-box"/>
    <property type="match status" value="1"/>
</dbReference>
<dbReference type="PROSITE" id="PS50103">
    <property type="entry name" value="ZF_C3H1"/>
    <property type="match status" value="1"/>
</dbReference>
<dbReference type="PROSITE" id="PS50089">
    <property type="entry name" value="ZF_RING_2"/>
    <property type="match status" value="1"/>
</dbReference>
<feature type="chain" id="PRO_0000055890" description="Pre-mRNA-splicing factor CWC24">
    <location>
        <begin position="1"/>
        <end position="229"/>
    </location>
</feature>
<feature type="zinc finger region" description="C3H1-type" evidence="3">
    <location>
        <begin position="110"/>
        <end position="138"/>
    </location>
</feature>
<feature type="zinc finger region" description="RING-type" evidence="2">
    <location>
        <begin position="171"/>
        <end position="209"/>
    </location>
</feature>
<feature type="region of interest" description="Disordered" evidence="4">
    <location>
        <begin position="1"/>
        <end position="43"/>
    </location>
</feature>
<feature type="compositionally biased region" description="Basic residues" evidence="4">
    <location>
        <begin position="1"/>
        <end position="17"/>
    </location>
</feature>
<name>CWC24_KLULA</name>
<proteinExistence type="inferred from homology"/>
<accession>Q6CSS6</accession>
<keyword id="KW-0238">DNA-binding</keyword>
<keyword id="KW-0479">Metal-binding</keyword>
<keyword id="KW-0507">mRNA processing</keyword>
<keyword id="KW-0508">mRNA splicing</keyword>
<keyword id="KW-0539">Nucleus</keyword>
<keyword id="KW-1185">Reference proteome</keyword>
<keyword id="KW-0747">Spliceosome</keyword>
<keyword id="KW-0862">Zinc</keyword>
<keyword id="KW-0863">Zinc-finger</keyword>
<protein>
    <recommendedName>
        <fullName>Pre-mRNA-splicing factor CWC24</fullName>
    </recommendedName>
</protein>
<evidence type="ECO:0000250" key="1"/>
<evidence type="ECO:0000255" key="2">
    <source>
        <dbReference type="PROSITE-ProRule" id="PRU00175"/>
    </source>
</evidence>
<evidence type="ECO:0000255" key="3">
    <source>
        <dbReference type="PROSITE-ProRule" id="PRU00723"/>
    </source>
</evidence>
<evidence type="ECO:0000256" key="4">
    <source>
        <dbReference type="SAM" id="MobiDB-lite"/>
    </source>
</evidence>
<evidence type="ECO:0000305" key="5"/>
<sequence>MFKKRVVKGSRDSKRKRLADEAVASDPVLPKDTGKTAVAEAQVEVENEDKRALYLAKEREEQEQELELRRKERTVLEQEIDEDIERKAKAKVSGFVKPVSKNMKTVTITDYQPDICKDFQKTGYCGYGDSCKFLHSRDDVAGGWKLNTDWKVDETQEKEVLKELEEIPFRCFLCKKEYTSPVVTKCNHYFCSSCFMKQMKVSTNCPICGKETEGAAKMATKLRKLLKKT</sequence>
<gene>
    <name type="primary">CWC24</name>
    <name type="ordered locus">KLLA0C18260g</name>
</gene>
<organism>
    <name type="scientific">Kluyveromyces lactis (strain ATCC 8585 / CBS 2359 / DSM 70799 / NBRC 1267 / NRRL Y-1140 / WM37)</name>
    <name type="common">Yeast</name>
    <name type="synonym">Candida sphaerica</name>
    <dbReference type="NCBI Taxonomy" id="284590"/>
    <lineage>
        <taxon>Eukaryota</taxon>
        <taxon>Fungi</taxon>
        <taxon>Dikarya</taxon>
        <taxon>Ascomycota</taxon>
        <taxon>Saccharomycotina</taxon>
        <taxon>Saccharomycetes</taxon>
        <taxon>Saccharomycetales</taxon>
        <taxon>Saccharomycetaceae</taxon>
        <taxon>Kluyveromyces</taxon>
    </lineage>
</organism>